<protein>
    <recommendedName>
        <fullName evidence="1">Queuine tRNA-ribosyltransferase</fullName>
        <ecNumber evidence="1">2.4.2.29</ecNumber>
    </recommendedName>
    <alternativeName>
        <fullName evidence="1">Guanine insertion enzyme</fullName>
    </alternativeName>
    <alternativeName>
        <fullName evidence="1">tRNA-guanine transglycosylase</fullName>
    </alternativeName>
</protein>
<accession>A8FXC6</accession>
<organism>
    <name type="scientific">Shewanella sediminis (strain HAW-EB3)</name>
    <dbReference type="NCBI Taxonomy" id="425104"/>
    <lineage>
        <taxon>Bacteria</taxon>
        <taxon>Pseudomonadati</taxon>
        <taxon>Pseudomonadota</taxon>
        <taxon>Gammaproteobacteria</taxon>
        <taxon>Alteromonadales</taxon>
        <taxon>Shewanellaceae</taxon>
        <taxon>Shewanella</taxon>
    </lineage>
</organism>
<comment type="function">
    <text evidence="1">Catalyzes the base-exchange of a guanine (G) residue with the queuine precursor 7-aminomethyl-7-deazaguanine (PreQ1) at position 34 (anticodon wobble position) in tRNAs with GU(N) anticodons (tRNA-Asp, -Asn, -His and -Tyr). Catalysis occurs through a double-displacement mechanism. The nucleophile active site attacks the C1' of nucleotide 34 to detach the guanine base from the RNA, forming a covalent enzyme-RNA intermediate. The proton acceptor active site deprotonates the incoming PreQ1, allowing a nucleophilic attack on the C1' of the ribose to form the product. After dissociation, two additional enzymatic reactions on the tRNA convert PreQ1 to queuine (Q), resulting in the hypermodified nucleoside queuosine (7-(((4,5-cis-dihydroxy-2-cyclopenten-1-yl)amino)methyl)-7-deazaguanosine).</text>
</comment>
<comment type="catalytic activity">
    <reaction evidence="1">
        <text>7-aminomethyl-7-carbaguanine + guanosine(34) in tRNA = 7-aminomethyl-7-carbaguanosine(34) in tRNA + guanine</text>
        <dbReference type="Rhea" id="RHEA:24104"/>
        <dbReference type="Rhea" id="RHEA-COMP:10341"/>
        <dbReference type="Rhea" id="RHEA-COMP:10342"/>
        <dbReference type="ChEBI" id="CHEBI:16235"/>
        <dbReference type="ChEBI" id="CHEBI:58703"/>
        <dbReference type="ChEBI" id="CHEBI:74269"/>
        <dbReference type="ChEBI" id="CHEBI:82833"/>
        <dbReference type="EC" id="2.4.2.29"/>
    </reaction>
</comment>
<comment type="cofactor">
    <cofactor evidence="1">
        <name>Zn(2+)</name>
        <dbReference type="ChEBI" id="CHEBI:29105"/>
    </cofactor>
    <text evidence="1">Binds 1 zinc ion per subunit.</text>
</comment>
<comment type="pathway">
    <text evidence="1">tRNA modification; tRNA-queuosine biosynthesis.</text>
</comment>
<comment type="subunit">
    <text evidence="1">Homodimer. Within each dimer, one monomer is responsible for RNA recognition and catalysis, while the other monomer binds to the replacement base PreQ1.</text>
</comment>
<comment type="similarity">
    <text evidence="1">Belongs to the queuine tRNA-ribosyltransferase family.</text>
</comment>
<dbReference type="EC" id="2.4.2.29" evidence="1"/>
<dbReference type="EMBL" id="CP000821">
    <property type="protein sequence ID" value="ABV37499.1"/>
    <property type="molecule type" value="Genomic_DNA"/>
</dbReference>
<dbReference type="RefSeq" id="WP_012143229.1">
    <property type="nucleotide sequence ID" value="NC_009831.1"/>
</dbReference>
<dbReference type="SMR" id="A8FXC6"/>
<dbReference type="STRING" id="425104.Ssed_2892"/>
<dbReference type="KEGG" id="sse:Ssed_2892"/>
<dbReference type="eggNOG" id="COG0343">
    <property type="taxonomic scope" value="Bacteria"/>
</dbReference>
<dbReference type="HOGENOM" id="CLU_022060_0_1_6"/>
<dbReference type="OrthoDB" id="9805417at2"/>
<dbReference type="UniPathway" id="UPA00392"/>
<dbReference type="Proteomes" id="UP000002015">
    <property type="component" value="Chromosome"/>
</dbReference>
<dbReference type="GO" id="GO:0005829">
    <property type="term" value="C:cytosol"/>
    <property type="evidence" value="ECO:0007669"/>
    <property type="project" value="TreeGrafter"/>
</dbReference>
<dbReference type="GO" id="GO:0046872">
    <property type="term" value="F:metal ion binding"/>
    <property type="evidence" value="ECO:0007669"/>
    <property type="project" value="UniProtKB-KW"/>
</dbReference>
<dbReference type="GO" id="GO:0008479">
    <property type="term" value="F:tRNA-guanosine(34) queuine transglycosylase activity"/>
    <property type="evidence" value="ECO:0007669"/>
    <property type="project" value="UniProtKB-UniRule"/>
</dbReference>
<dbReference type="GO" id="GO:0008616">
    <property type="term" value="P:queuosine biosynthetic process"/>
    <property type="evidence" value="ECO:0007669"/>
    <property type="project" value="UniProtKB-UniRule"/>
</dbReference>
<dbReference type="GO" id="GO:0002099">
    <property type="term" value="P:tRNA wobble guanine modification"/>
    <property type="evidence" value="ECO:0007669"/>
    <property type="project" value="TreeGrafter"/>
</dbReference>
<dbReference type="GO" id="GO:0101030">
    <property type="term" value="P:tRNA-guanine transglycosylation"/>
    <property type="evidence" value="ECO:0007669"/>
    <property type="project" value="InterPro"/>
</dbReference>
<dbReference type="FunFam" id="3.20.20.105:FF:000001">
    <property type="entry name" value="Queuine tRNA-ribosyltransferase"/>
    <property type="match status" value="1"/>
</dbReference>
<dbReference type="Gene3D" id="3.20.20.105">
    <property type="entry name" value="Queuine tRNA-ribosyltransferase-like"/>
    <property type="match status" value="1"/>
</dbReference>
<dbReference type="HAMAP" id="MF_00168">
    <property type="entry name" value="Q_tRNA_Tgt"/>
    <property type="match status" value="1"/>
</dbReference>
<dbReference type="InterPro" id="IPR050076">
    <property type="entry name" value="ArchSynthase1/Queuine_TRR"/>
</dbReference>
<dbReference type="InterPro" id="IPR004803">
    <property type="entry name" value="TGT"/>
</dbReference>
<dbReference type="InterPro" id="IPR036511">
    <property type="entry name" value="TGT-like_sf"/>
</dbReference>
<dbReference type="InterPro" id="IPR002616">
    <property type="entry name" value="tRNA_ribo_trans-like"/>
</dbReference>
<dbReference type="NCBIfam" id="TIGR00430">
    <property type="entry name" value="Q_tRNA_tgt"/>
    <property type="match status" value="1"/>
</dbReference>
<dbReference type="NCBIfam" id="TIGR00449">
    <property type="entry name" value="tgt_general"/>
    <property type="match status" value="1"/>
</dbReference>
<dbReference type="PANTHER" id="PTHR46499">
    <property type="entry name" value="QUEUINE TRNA-RIBOSYLTRANSFERASE"/>
    <property type="match status" value="1"/>
</dbReference>
<dbReference type="PANTHER" id="PTHR46499:SF1">
    <property type="entry name" value="QUEUINE TRNA-RIBOSYLTRANSFERASE"/>
    <property type="match status" value="1"/>
</dbReference>
<dbReference type="Pfam" id="PF01702">
    <property type="entry name" value="TGT"/>
    <property type="match status" value="1"/>
</dbReference>
<dbReference type="SUPFAM" id="SSF51713">
    <property type="entry name" value="tRNA-guanine transglycosylase"/>
    <property type="match status" value="1"/>
</dbReference>
<evidence type="ECO:0000255" key="1">
    <source>
        <dbReference type="HAMAP-Rule" id="MF_00168"/>
    </source>
</evidence>
<name>TGT_SHESH</name>
<reference key="1">
    <citation type="submission" date="2007-08" db="EMBL/GenBank/DDBJ databases">
        <title>Complete sequence of Shewanella sediminis HAW-EB3.</title>
        <authorList>
            <consortium name="US DOE Joint Genome Institute"/>
            <person name="Copeland A."/>
            <person name="Lucas S."/>
            <person name="Lapidus A."/>
            <person name="Barry K."/>
            <person name="Glavina del Rio T."/>
            <person name="Dalin E."/>
            <person name="Tice H."/>
            <person name="Pitluck S."/>
            <person name="Chertkov O."/>
            <person name="Brettin T."/>
            <person name="Bruce D."/>
            <person name="Detter J.C."/>
            <person name="Han C."/>
            <person name="Schmutz J."/>
            <person name="Larimer F."/>
            <person name="Land M."/>
            <person name="Hauser L."/>
            <person name="Kyrpides N."/>
            <person name="Kim E."/>
            <person name="Zhao J.-S."/>
            <person name="Richardson P."/>
        </authorList>
    </citation>
    <scope>NUCLEOTIDE SEQUENCE [LARGE SCALE GENOMIC DNA]</scope>
    <source>
        <strain>HAW-EB3</strain>
    </source>
</reference>
<gene>
    <name evidence="1" type="primary">tgt</name>
    <name type="ordered locus">Ssed_2892</name>
</gene>
<sequence>MKFELDTTQGRARRGRLVFERGTVETPAFMPVGTYGTVKGMTPEEVRATGADILLGNTFHLWLRPGEEIMRKHGDLHDFMNWQRPILTDSGGFQVFSLGDIRKITEEGVHFRSPINGEKIFLDPEKSMQIQNSLGSDVVMIFDECTPYPATEDEARKSMQMSLRWAQRSRDEFDKLENPNSLFGIIQGGVYEDLRDESLKGLVDIGFDGYAVGGLAVGEPKADMHRILEHTCPQIPTDKPRYLMGVGKPEDLVEGVRRGVDMFDCVMPTRNARNGHLFTTEGVIKIRNARHRDDTSPLDDKCDCYTCKNYSRAYLYHLDRCNEILGARLNTIHNLRYYQKLMEGLRGAIETGTLDAFVEEFYTSQGREVPEVPELTD</sequence>
<keyword id="KW-0328">Glycosyltransferase</keyword>
<keyword id="KW-0479">Metal-binding</keyword>
<keyword id="KW-0671">Queuosine biosynthesis</keyword>
<keyword id="KW-1185">Reference proteome</keyword>
<keyword id="KW-0808">Transferase</keyword>
<keyword id="KW-0819">tRNA processing</keyword>
<keyword id="KW-0862">Zinc</keyword>
<feature type="chain" id="PRO_1000077020" description="Queuine tRNA-ribosyltransferase">
    <location>
        <begin position="1"/>
        <end position="377"/>
    </location>
</feature>
<feature type="region of interest" description="RNA binding" evidence="1">
    <location>
        <begin position="245"/>
        <end position="251"/>
    </location>
</feature>
<feature type="region of interest" description="RNA binding; important for wobble base 34 recognition" evidence="1">
    <location>
        <begin position="269"/>
        <end position="273"/>
    </location>
</feature>
<feature type="active site" description="Proton acceptor" evidence="1">
    <location>
        <position position="89"/>
    </location>
</feature>
<feature type="active site" description="Nucleophile" evidence="1">
    <location>
        <position position="264"/>
    </location>
</feature>
<feature type="binding site" evidence="1">
    <location>
        <begin position="89"/>
        <end position="93"/>
    </location>
    <ligand>
        <name>substrate</name>
    </ligand>
</feature>
<feature type="binding site" evidence="1">
    <location>
        <position position="143"/>
    </location>
    <ligand>
        <name>substrate</name>
    </ligand>
</feature>
<feature type="binding site" evidence="1">
    <location>
        <position position="187"/>
    </location>
    <ligand>
        <name>substrate</name>
    </ligand>
</feature>
<feature type="binding site" evidence="1">
    <location>
        <position position="214"/>
    </location>
    <ligand>
        <name>substrate</name>
    </ligand>
</feature>
<feature type="binding site" evidence="1">
    <location>
        <position position="302"/>
    </location>
    <ligand>
        <name>Zn(2+)</name>
        <dbReference type="ChEBI" id="CHEBI:29105"/>
    </ligand>
</feature>
<feature type="binding site" evidence="1">
    <location>
        <position position="304"/>
    </location>
    <ligand>
        <name>Zn(2+)</name>
        <dbReference type="ChEBI" id="CHEBI:29105"/>
    </ligand>
</feature>
<feature type="binding site" evidence="1">
    <location>
        <position position="307"/>
    </location>
    <ligand>
        <name>Zn(2+)</name>
        <dbReference type="ChEBI" id="CHEBI:29105"/>
    </ligand>
</feature>
<feature type="binding site" evidence="1">
    <location>
        <position position="333"/>
    </location>
    <ligand>
        <name>Zn(2+)</name>
        <dbReference type="ChEBI" id="CHEBI:29105"/>
    </ligand>
</feature>
<proteinExistence type="inferred from homology"/>